<evidence type="ECO:0000255" key="1">
    <source>
        <dbReference type="HAMAP-Rule" id="MF_00191"/>
    </source>
</evidence>
<feature type="chain" id="PRO_1000098938" description="4-hydroxy-3-methylbut-2-enyl diphosphate reductase">
    <location>
        <begin position="1"/>
        <end position="325"/>
    </location>
</feature>
<feature type="active site" description="Proton donor" evidence="1">
    <location>
        <position position="128"/>
    </location>
</feature>
<feature type="binding site" evidence="1">
    <location>
        <position position="13"/>
    </location>
    <ligand>
        <name>[4Fe-4S] cluster</name>
        <dbReference type="ChEBI" id="CHEBI:49883"/>
    </ligand>
</feature>
<feature type="binding site" evidence="1">
    <location>
        <position position="42"/>
    </location>
    <ligand>
        <name>(2E)-4-hydroxy-3-methylbut-2-enyl diphosphate</name>
        <dbReference type="ChEBI" id="CHEBI:128753"/>
    </ligand>
</feature>
<feature type="binding site" evidence="1">
    <location>
        <position position="42"/>
    </location>
    <ligand>
        <name>dimethylallyl diphosphate</name>
        <dbReference type="ChEBI" id="CHEBI:57623"/>
    </ligand>
</feature>
<feature type="binding site" evidence="1">
    <location>
        <position position="42"/>
    </location>
    <ligand>
        <name>isopentenyl diphosphate</name>
        <dbReference type="ChEBI" id="CHEBI:128769"/>
    </ligand>
</feature>
<feature type="binding site" evidence="1">
    <location>
        <position position="76"/>
    </location>
    <ligand>
        <name>(2E)-4-hydroxy-3-methylbut-2-enyl diphosphate</name>
        <dbReference type="ChEBI" id="CHEBI:128753"/>
    </ligand>
</feature>
<feature type="binding site" evidence="1">
    <location>
        <position position="76"/>
    </location>
    <ligand>
        <name>dimethylallyl diphosphate</name>
        <dbReference type="ChEBI" id="CHEBI:57623"/>
    </ligand>
</feature>
<feature type="binding site" evidence="1">
    <location>
        <position position="76"/>
    </location>
    <ligand>
        <name>isopentenyl diphosphate</name>
        <dbReference type="ChEBI" id="CHEBI:128769"/>
    </ligand>
</feature>
<feature type="binding site" evidence="1">
    <location>
        <position position="98"/>
    </location>
    <ligand>
        <name>[4Fe-4S] cluster</name>
        <dbReference type="ChEBI" id="CHEBI:49883"/>
    </ligand>
</feature>
<feature type="binding site" evidence="1">
    <location>
        <position position="126"/>
    </location>
    <ligand>
        <name>(2E)-4-hydroxy-3-methylbut-2-enyl diphosphate</name>
        <dbReference type="ChEBI" id="CHEBI:128753"/>
    </ligand>
</feature>
<feature type="binding site" evidence="1">
    <location>
        <position position="126"/>
    </location>
    <ligand>
        <name>dimethylallyl diphosphate</name>
        <dbReference type="ChEBI" id="CHEBI:57623"/>
    </ligand>
</feature>
<feature type="binding site" evidence="1">
    <location>
        <position position="126"/>
    </location>
    <ligand>
        <name>isopentenyl diphosphate</name>
        <dbReference type="ChEBI" id="CHEBI:128769"/>
    </ligand>
</feature>
<feature type="binding site" evidence="1">
    <location>
        <position position="169"/>
    </location>
    <ligand>
        <name>(2E)-4-hydroxy-3-methylbut-2-enyl diphosphate</name>
        <dbReference type="ChEBI" id="CHEBI:128753"/>
    </ligand>
</feature>
<feature type="binding site" evidence="1">
    <location>
        <position position="230"/>
    </location>
    <ligand>
        <name>[4Fe-4S] cluster</name>
        <dbReference type="ChEBI" id="CHEBI:49883"/>
    </ligand>
</feature>
<feature type="binding site" evidence="1">
    <location>
        <position position="258"/>
    </location>
    <ligand>
        <name>(2E)-4-hydroxy-3-methylbut-2-enyl diphosphate</name>
        <dbReference type="ChEBI" id="CHEBI:128753"/>
    </ligand>
</feature>
<feature type="binding site" evidence="1">
    <location>
        <position position="258"/>
    </location>
    <ligand>
        <name>dimethylallyl diphosphate</name>
        <dbReference type="ChEBI" id="CHEBI:57623"/>
    </ligand>
</feature>
<feature type="binding site" evidence="1">
    <location>
        <position position="258"/>
    </location>
    <ligand>
        <name>isopentenyl diphosphate</name>
        <dbReference type="ChEBI" id="CHEBI:128769"/>
    </ligand>
</feature>
<feature type="binding site" evidence="1">
    <location>
        <position position="259"/>
    </location>
    <ligand>
        <name>(2E)-4-hydroxy-3-methylbut-2-enyl diphosphate</name>
        <dbReference type="ChEBI" id="CHEBI:128753"/>
    </ligand>
</feature>
<feature type="binding site" evidence="1">
    <location>
        <position position="259"/>
    </location>
    <ligand>
        <name>dimethylallyl diphosphate</name>
        <dbReference type="ChEBI" id="CHEBI:57623"/>
    </ligand>
</feature>
<feature type="binding site" evidence="1">
    <location>
        <position position="259"/>
    </location>
    <ligand>
        <name>isopentenyl diphosphate</name>
        <dbReference type="ChEBI" id="CHEBI:128769"/>
    </ligand>
</feature>
<feature type="binding site" evidence="1">
    <location>
        <position position="260"/>
    </location>
    <ligand>
        <name>(2E)-4-hydroxy-3-methylbut-2-enyl diphosphate</name>
        <dbReference type="ChEBI" id="CHEBI:128753"/>
    </ligand>
</feature>
<feature type="binding site" evidence="1">
    <location>
        <position position="260"/>
    </location>
    <ligand>
        <name>dimethylallyl diphosphate</name>
        <dbReference type="ChEBI" id="CHEBI:57623"/>
    </ligand>
</feature>
<feature type="binding site" evidence="1">
    <location>
        <position position="260"/>
    </location>
    <ligand>
        <name>isopentenyl diphosphate</name>
        <dbReference type="ChEBI" id="CHEBI:128769"/>
    </ligand>
</feature>
<feature type="binding site" evidence="1">
    <location>
        <position position="306"/>
    </location>
    <ligand>
        <name>(2E)-4-hydroxy-3-methylbut-2-enyl diphosphate</name>
        <dbReference type="ChEBI" id="CHEBI:128753"/>
    </ligand>
</feature>
<feature type="binding site" evidence="1">
    <location>
        <position position="306"/>
    </location>
    <ligand>
        <name>dimethylallyl diphosphate</name>
        <dbReference type="ChEBI" id="CHEBI:57623"/>
    </ligand>
</feature>
<feature type="binding site" evidence="1">
    <location>
        <position position="306"/>
    </location>
    <ligand>
        <name>isopentenyl diphosphate</name>
        <dbReference type="ChEBI" id="CHEBI:128769"/>
    </ligand>
</feature>
<comment type="function">
    <text evidence="1">Catalyzes the conversion of 1-hydroxy-2-methyl-2-(E)-butenyl 4-diphosphate (HMBPP) into a mixture of isopentenyl diphosphate (IPP) and dimethylallyl diphosphate (DMAPP). Acts in the terminal step of the DOXP/MEP pathway for isoprenoid precursor biosynthesis.</text>
</comment>
<comment type="catalytic activity">
    <reaction evidence="1">
        <text>isopentenyl diphosphate + 2 oxidized [2Fe-2S]-[ferredoxin] + H2O = (2E)-4-hydroxy-3-methylbut-2-enyl diphosphate + 2 reduced [2Fe-2S]-[ferredoxin] + 2 H(+)</text>
        <dbReference type="Rhea" id="RHEA:24488"/>
        <dbReference type="Rhea" id="RHEA-COMP:10000"/>
        <dbReference type="Rhea" id="RHEA-COMP:10001"/>
        <dbReference type="ChEBI" id="CHEBI:15377"/>
        <dbReference type="ChEBI" id="CHEBI:15378"/>
        <dbReference type="ChEBI" id="CHEBI:33737"/>
        <dbReference type="ChEBI" id="CHEBI:33738"/>
        <dbReference type="ChEBI" id="CHEBI:128753"/>
        <dbReference type="ChEBI" id="CHEBI:128769"/>
        <dbReference type="EC" id="1.17.7.4"/>
    </reaction>
</comment>
<comment type="catalytic activity">
    <reaction evidence="1">
        <text>dimethylallyl diphosphate + 2 oxidized [2Fe-2S]-[ferredoxin] + H2O = (2E)-4-hydroxy-3-methylbut-2-enyl diphosphate + 2 reduced [2Fe-2S]-[ferredoxin] + 2 H(+)</text>
        <dbReference type="Rhea" id="RHEA:24825"/>
        <dbReference type="Rhea" id="RHEA-COMP:10000"/>
        <dbReference type="Rhea" id="RHEA-COMP:10001"/>
        <dbReference type="ChEBI" id="CHEBI:15377"/>
        <dbReference type="ChEBI" id="CHEBI:15378"/>
        <dbReference type="ChEBI" id="CHEBI:33737"/>
        <dbReference type="ChEBI" id="CHEBI:33738"/>
        <dbReference type="ChEBI" id="CHEBI:57623"/>
        <dbReference type="ChEBI" id="CHEBI:128753"/>
        <dbReference type="EC" id="1.17.7.4"/>
    </reaction>
</comment>
<comment type="cofactor">
    <cofactor evidence="1">
        <name>[4Fe-4S] cluster</name>
        <dbReference type="ChEBI" id="CHEBI:49883"/>
    </cofactor>
    <text evidence="1">Binds 1 [4Fe-4S] cluster per subunit.</text>
</comment>
<comment type="pathway">
    <text evidence="1">Isoprenoid biosynthesis; dimethylallyl diphosphate biosynthesis; dimethylallyl diphosphate from (2E)-4-hydroxy-3-methylbutenyl diphosphate: step 1/1.</text>
</comment>
<comment type="pathway">
    <text evidence="1">Isoprenoid biosynthesis; isopentenyl diphosphate biosynthesis via DXP pathway; isopentenyl diphosphate from 1-deoxy-D-xylulose 5-phosphate: step 6/6.</text>
</comment>
<comment type="similarity">
    <text evidence="1">Belongs to the IspH family.</text>
</comment>
<protein>
    <recommendedName>
        <fullName evidence="1">4-hydroxy-3-methylbut-2-enyl diphosphate reductase</fullName>
        <shortName evidence="1">HMBPP reductase</shortName>
        <ecNumber evidence="1">1.17.7.4</ecNumber>
    </recommendedName>
</protein>
<dbReference type="EC" id="1.17.7.4" evidence="1"/>
<dbReference type="EMBL" id="CP001101">
    <property type="protein sequence ID" value="ACE03420.1"/>
    <property type="molecule type" value="Genomic_DNA"/>
</dbReference>
<dbReference type="SMR" id="B3EM42"/>
<dbReference type="STRING" id="331678.Cphamn1_0456"/>
<dbReference type="KEGG" id="cpb:Cphamn1_0456"/>
<dbReference type="eggNOG" id="COG0761">
    <property type="taxonomic scope" value="Bacteria"/>
</dbReference>
<dbReference type="HOGENOM" id="CLU_027486_0_1_10"/>
<dbReference type="OrthoDB" id="9777362at2"/>
<dbReference type="UniPathway" id="UPA00056">
    <property type="reaction ID" value="UER00097"/>
</dbReference>
<dbReference type="UniPathway" id="UPA00059">
    <property type="reaction ID" value="UER00105"/>
</dbReference>
<dbReference type="GO" id="GO:0051539">
    <property type="term" value="F:4 iron, 4 sulfur cluster binding"/>
    <property type="evidence" value="ECO:0007669"/>
    <property type="project" value="UniProtKB-UniRule"/>
</dbReference>
<dbReference type="GO" id="GO:0051745">
    <property type="term" value="F:4-hydroxy-3-methylbut-2-enyl diphosphate reductase activity"/>
    <property type="evidence" value="ECO:0007669"/>
    <property type="project" value="UniProtKB-UniRule"/>
</dbReference>
<dbReference type="GO" id="GO:0046872">
    <property type="term" value="F:metal ion binding"/>
    <property type="evidence" value="ECO:0007669"/>
    <property type="project" value="UniProtKB-KW"/>
</dbReference>
<dbReference type="GO" id="GO:0050992">
    <property type="term" value="P:dimethylallyl diphosphate biosynthetic process"/>
    <property type="evidence" value="ECO:0007669"/>
    <property type="project" value="UniProtKB-UniRule"/>
</dbReference>
<dbReference type="GO" id="GO:0019288">
    <property type="term" value="P:isopentenyl diphosphate biosynthetic process, methylerythritol 4-phosphate pathway"/>
    <property type="evidence" value="ECO:0007669"/>
    <property type="project" value="UniProtKB-UniRule"/>
</dbReference>
<dbReference type="GO" id="GO:0016114">
    <property type="term" value="P:terpenoid biosynthetic process"/>
    <property type="evidence" value="ECO:0007669"/>
    <property type="project" value="UniProtKB-UniRule"/>
</dbReference>
<dbReference type="CDD" id="cd13944">
    <property type="entry name" value="lytB_ispH"/>
    <property type="match status" value="1"/>
</dbReference>
<dbReference type="Gene3D" id="3.40.50.11270">
    <property type="match status" value="1"/>
</dbReference>
<dbReference type="Gene3D" id="3.40.1010.20">
    <property type="entry name" value="4-hydroxy-3-methylbut-2-enyl diphosphate reductase, catalytic domain"/>
    <property type="match status" value="2"/>
</dbReference>
<dbReference type="HAMAP" id="MF_00191">
    <property type="entry name" value="IspH"/>
    <property type="match status" value="1"/>
</dbReference>
<dbReference type="InterPro" id="IPR003451">
    <property type="entry name" value="LytB/IspH"/>
</dbReference>
<dbReference type="NCBIfam" id="TIGR00216">
    <property type="entry name" value="ispH_lytB"/>
    <property type="match status" value="1"/>
</dbReference>
<dbReference type="NCBIfam" id="NF002187">
    <property type="entry name" value="PRK01045.1-1"/>
    <property type="match status" value="1"/>
</dbReference>
<dbReference type="PANTHER" id="PTHR30426">
    <property type="entry name" value="4-HYDROXY-3-METHYLBUT-2-ENYL DIPHOSPHATE REDUCTASE"/>
    <property type="match status" value="1"/>
</dbReference>
<dbReference type="PANTHER" id="PTHR30426:SF0">
    <property type="entry name" value="4-HYDROXY-3-METHYLBUT-2-ENYL DIPHOSPHATE REDUCTASE"/>
    <property type="match status" value="1"/>
</dbReference>
<dbReference type="Pfam" id="PF02401">
    <property type="entry name" value="LYTB"/>
    <property type="match status" value="1"/>
</dbReference>
<reference key="1">
    <citation type="submission" date="2008-06" db="EMBL/GenBank/DDBJ databases">
        <title>Complete sequence of Chlorobium phaeobacteroides BS1.</title>
        <authorList>
            <consortium name="US DOE Joint Genome Institute"/>
            <person name="Lucas S."/>
            <person name="Copeland A."/>
            <person name="Lapidus A."/>
            <person name="Glavina del Rio T."/>
            <person name="Dalin E."/>
            <person name="Tice H."/>
            <person name="Bruce D."/>
            <person name="Goodwin L."/>
            <person name="Pitluck S."/>
            <person name="Schmutz J."/>
            <person name="Larimer F."/>
            <person name="Land M."/>
            <person name="Hauser L."/>
            <person name="Kyrpides N."/>
            <person name="Ovchinnikova G."/>
            <person name="Li T."/>
            <person name="Liu Z."/>
            <person name="Zhao F."/>
            <person name="Overmann J."/>
            <person name="Bryant D.A."/>
            <person name="Richardson P."/>
        </authorList>
    </citation>
    <scope>NUCLEOTIDE SEQUENCE [LARGE SCALE GENOMIC DNA]</scope>
    <source>
        <strain>BS1</strain>
    </source>
</reference>
<accession>B3EM42</accession>
<proteinExistence type="inferred from homology"/>
<sequence>MKVHLDRTSSGFCIGVQGTIHLAEEKLEELDSKLYCLGDIVHNEVEVKRLEDLGLITIDNEEYNKLKHAHVLVRAHGEPPSTYKRADSNELSITDSTCPVVSKLQRTARLLFELGFQIIIYGKKTHPEVIGINGQCADQAVIIKHADLSVPEETDPIDFTRQTALISQTTMDVPGFYILKKNLESLFADRTDAAEQKSTHSWKTIRDIDITAEMTGICPLPDLVYKDTICRQVSSRNAKLHDFAAANDIIIFVAGKKSSNGQVLFNICRESNPRSYFIADQTGLQDEWFYDNGRPVGSVGVCGATSTPMWLLENVAHSIEQTYAG</sequence>
<keyword id="KW-0004">4Fe-4S</keyword>
<keyword id="KW-0408">Iron</keyword>
<keyword id="KW-0411">Iron-sulfur</keyword>
<keyword id="KW-0414">Isoprene biosynthesis</keyword>
<keyword id="KW-0479">Metal-binding</keyword>
<keyword id="KW-0560">Oxidoreductase</keyword>
<organism>
    <name type="scientific">Chlorobium phaeobacteroides (strain BS1)</name>
    <dbReference type="NCBI Taxonomy" id="331678"/>
    <lineage>
        <taxon>Bacteria</taxon>
        <taxon>Pseudomonadati</taxon>
        <taxon>Chlorobiota</taxon>
        <taxon>Chlorobiia</taxon>
        <taxon>Chlorobiales</taxon>
        <taxon>Chlorobiaceae</taxon>
        <taxon>Chlorobium/Pelodictyon group</taxon>
        <taxon>Chlorobium</taxon>
    </lineage>
</organism>
<name>ISPH_CHLPB</name>
<gene>
    <name evidence="1" type="primary">ispH</name>
    <name type="ordered locus">Cphamn1_0456</name>
</gene>